<proteinExistence type="evidence at transcript level"/>
<feature type="transit peptide" description="Mitochondrion" evidence="2">
    <location>
        <begin position="1"/>
        <end position="18"/>
    </location>
</feature>
<feature type="chain" id="PRO_0000043167" description="Mitochondrial import inner membrane translocase subunit Tim21">
    <location>
        <begin position="19"/>
        <end position="244"/>
    </location>
</feature>
<feature type="transmembrane region" description="Helical" evidence="2">
    <location>
        <begin position="108"/>
        <end position="128"/>
    </location>
</feature>
<feature type="region of interest" description="Disordered" evidence="3">
    <location>
        <begin position="69"/>
        <end position="89"/>
    </location>
</feature>
<reference key="1">
    <citation type="submission" date="2005-08" db="EMBL/GenBank/DDBJ databases">
        <authorList>
            <consortium name="NIH - Mammalian Gene Collection (MGC) project"/>
        </authorList>
    </citation>
    <scope>NUCLEOTIDE SEQUENCE [LARGE SCALE MRNA]</scope>
    <source>
        <strain>Hereford</strain>
        <tissue>Testis</tissue>
    </source>
</reference>
<evidence type="ECO:0000250" key="1">
    <source>
        <dbReference type="UniProtKB" id="Q9BVV7"/>
    </source>
</evidence>
<evidence type="ECO:0000255" key="2"/>
<evidence type="ECO:0000256" key="3">
    <source>
        <dbReference type="SAM" id="MobiDB-lite"/>
    </source>
</evidence>
<evidence type="ECO:0000305" key="4"/>
<gene>
    <name type="primary">TIMM21</name>
    <name type="synonym">TIM21</name>
</gene>
<name>TIM21_BOVIN</name>
<sequence>MICTLLRAVRCTERLHGCPGKPWFLPHSVPHRACSQTEPRWRWGLQEQNTTARPRCIWGVTQRSIWTQVRSPQSAKEDGSKQVSVHRSQGGETVLSTSQKVKEAGRDFTYLIVVLIGISITGGLFYTIFRELFSSSSPNKIYGKALEKCRSHPEVISVFGEPVKGYGEVTRRGRRQLVSFIEYKKDGLKHMRVKFYIQGSEPGKQGTVHLEVKENPESGEYEFRYIFVELEPYSRTIVVEDNRS</sequence>
<keyword id="KW-0472">Membrane</keyword>
<keyword id="KW-0496">Mitochondrion</keyword>
<keyword id="KW-0653">Protein transport</keyword>
<keyword id="KW-1185">Reference proteome</keyword>
<keyword id="KW-0809">Transit peptide</keyword>
<keyword id="KW-0811">Translocation</keyword>
<keyword id="KW-0812">Transmembrane</keyword>
<keyword id="KW-1133">Transmembrane helix</keyword>
<keyword id="KW-0813">Transport</keyword>
<dbReference type="EMBL" id="BC102688">
    <property type="protein sequence ID" value="AAI02689.1"/>
    <property type="molecule type" value="mRNA"/>
</dbReference>
<dbReference type="RefSeq" id="NP_001030530.1">
    <property type="nucleotide sequence ID" value="NM_001035453.2"/>
</dbReference>
<dbReference type="SMR" id="Q3SZV6"/>
<dbReference type="FunCoup" id="Q3SZV6">
    <property type="interactions" value="2644"/>
</dbReference>
<dbReference type="STRING" id="9913.ENSBTAP00000012777"/>
<dbReference type="PaxDb" id="9913-ENSBTAP00000012777"/>
<dbReference type="GeneID" id="614633"/>
<dbReference type="KEGG" id="bta:614633"/>
<dbReference type="CTD" id="29090"/>
<dbReference type="eggNOG" id="KOG4836">
    <property type="taxonomic scope" value="Eukaryota"/>
</dbReference>
<dbReference type="InParanoid" id="Q3SZV6"/>
<dbReference type="OrthoDB" id="436405at2759"/>
<dbReference type="Proteomes" id="UP000009136">
    <property type="component" value="Unplaced"/>
</dbReference>
<dbReference type="GO" id="GO:0005744">
    <property type="term" value="C:TIM23 mitochondrial import inner membrane translocase complex"/>
    <property type="evidence" value="ECO:0000250"/>
    <property type="project" value="UniProtKB"/>
</dbReference>
<dbReference type="GO" id="GO:0033617">
    <property type="term" value="P:mitochondrial cytochrome c oxidase assembly"/>
    <property type="evidence" value="ECO:0000250"/>
    <property type="project" value="UniProtKB"/>
</dbReference>
<dbReference type="GO" id="GO:0032981">
    <property type="term" value="P:mitochondrial respiratory chain complex I assembly"/>
    <property type="evidence" value="ECO:0000250"/>
    <property type="project" value="UniProtKB"/>
</dbReference>
<dbReference type="GO" id="GO:0030150">
    <property type="term" value="P:protein import into mitochondrial matrix"/>
    <property type="evidence" value="ECO:0000250"/>
    <property type="project" value="UniProtKB"/>
</dbReference>
<dbReference type="FunFam" id="3.10.450.320:FF:000001">
    <property type="entry name" value="Mitochondrial import inner membrane translocase subunit Tim21"/>
    <property type="match status" value="1"/>
</dbReference>
<dbReference type="Gene3D" id="3.10.450.320">
    <property type="entry name" value="Mitochondrial import inner membrane translocase subunit Tim21"/>
    <property type="match status" value="1"/>
</dbReference>
<dbReference type="InterPro" id="IPR013261">
    <property type="entry name" value="Tim21"/>
</dbReference>
<dbReference type="InterPro" id="IPR038552">
    <property type="entry name" value="Tim21_IMS_sf"/>
</dbReference>
<dbReference type="PANTHER" id="PTHR13032">
    <property type="entry name" value="MITOCHONDRIAL IMPORT INNER MEMBRANE TRANSLOCASE SUBUNIT TIM21"/>
    <property type="match status" value="1"/>
</dbReference>
<dbReference type="PANTHER" id="PTHR13032:SF6">
    <property type="entry name" value="MITOCHONDRIAL IMPORT INNER MEMBRANE TRANSLOCASE SUBUNIT TIM21"/>
    <property type="match status" value="1"/>
</dbReference>
<dbReference type="Pfam" id="PF08294">
    <property type="entry name" value="TIM21"/>
    <property type="match status" value="1"/>
</dbReference>
<comment type="function">
    <text evidence="1">Participates in the translocation of transit peptide-containing proteins across the mitochondrial inner membrane. Also required for assembly of mitochondrial respiratory chain complex I and complex IV as component of the MITRAC (mitochondrial translation regulation assembly intermediate of cytochrome c oxidase complex) complex. Probably shuttles between the presequence translocase and respiratory-chain assembly intermediates in a process that promotes incorporation of early nuclear-encoded subunits into these complexes.</text>
</comment>
<comment type="subunit">
    <text evidence="1">Component of the TIM23 complex. Component of the MITRAC (mitochondrial translation regulation assembly intermediate of cytochrome c oxidase complex) complex, the core components of this complex being COA3/MITRAC12 and COX14. Interacts with COA3 and MT-CO1/COX1.</text>
</comment>
<comment type="subcellular location">
    <subcellularLocation>
        <location evidence="4">Mitochondrion membrane</location>
        <topology evidence="4">Single-pass membrane protein</topology>
    </subcellularLocation>
</comment>
<comment type="similarity">
    <text evidence="4">Belongs to the TIM21 family.</text>
</comment>
<accession>Q3SZV6</accession>
<organism>
    <name type="scientific">Bos taurus</name>
    <name type="common">Bovine</name>
    <dbReference type="NCBI Taxonomy" id="9913"/>
    <lineage>
        <taxon>Eukaryota</taxon>
        <taxon>Metazoa</taxon>
        <taxon>Chordata</taxon>
        <taxon>Craniata</taxon>
        <taxon>Vertebrata</taxon>
        <taxon>Euteleostomi</taxon>
        <taxon>Mammalia</taxon>
        <taxon>Eutheria</taxon>
        <taxon>Laurasiatheria</taxon>
        <taxon>Artiodactyla</taxon>
        <taxon>Ruminantia</taxon>
        <taxon>Pecora</taxon>
        <taxon>Bovidae</taxon>
        <taxon>Bovinae</taxon>
        <taxon>Bos</taxon>
    </lineage>
</organism>
<protein>
    <recommendedName>
        <fullName>Mitochondrial import inner membrane translocase subunit Tim21</fullName>
    </recommendedName>
    <alternativeName>
        <fullName>TIM21-like protein, mitochondrial</fullName>
    </alternativeName>
</protein>